<name>RS6_MARN8</name>
<gene>
    <name evidence="1" type="primary">rpsF</name>
    <name type="ordered locus">Maqu_2386</name>
</gene>
<keyword id="KW-0687">Ribonucleoprotein</keyword>
<keyword id="KW-0689">Ribosomal protein</keyword>
<keyword id="KW-0694">RNA-binding</keyword>
<keyword id="KW-0699">rRNA-binding</keyword>
<sequence length="137" mass="16023">MRHYEIVFMVHPDQSEQVPAMIERYTSVITEDGGKVHRLEDWGRRHLAYPINKIHKAHYVLMNIECSQAAMDELTHNFRFNDAIIRDLILRRDEAVTDLSPMKAAESREDRRSGGDDRPRRSADSEERQSASQDEEE</sequence>
<organism>
    <name type="scientific">Marinobacter nauticus (strain ATCC 700491 / DSM 11845 / VT8)</name>
    <name type="common">Marinobacter aquaeolei</name>
    <dbReference type="NCBI Taxonomy" id="351348"/>
    <lineage>
        <taxon>Bacteria</taxon>
        <taxon>Pseudomonadati</taxon>
        <taxon>Pseudomonadota</taxon>
        <taxon>Gammaproteobacteria</taxon>
        <taxon>Pseudomonadales</taxon>
        <taxon>Marinobacteraceae</taxon>
        <taxon>Marinobacter</taxon>
    </lineage>
</organism>
<accession>A1U393</accession>
<comment type="function">
    <text evidence="1">Binds together with bS18 to 16S ribosomal RNA.</text>
</comment>
<comment type="similarity">
    <text evidence="1">Belongs to the bacterial ribosomal protein bS6 family.</text>
</comment>
<proteinExistence type="inferred from homology"/>
<evidence type="ECO:0000255" key="1">
    <source>
        <dbReference type="HAMAP-Rule" id="MF_00360"/>
    </source>
</evidence>
<evidence type="ECO:0000256" key="2">
    <source>
        <dbReference type="SAM" id="MobiDB-lite"/>
    </source>
</evidence>
<evidence type="ECO:0000305" key="3"/>
<dbReference type="EMBL" id="CP000514">
    <property type="protein sequence ID" value="ABM19462.1"/>
    <property type="molecule type" value="Genomic_DNA"/>
</dbReference>
<dbReference type="RefSeq" id="WP_011785849.1">
    <property type="nucleotide sequence ID" value="NC_008740.1"/>
</dbReference>
<dbReference type="SMR" id="A1U393"/>
<dbReference type="STRING" id="351348.Maqu_2386"/>
<dbReference type="GeneID" id="31820352"/>
<dbReference type="KEGG" id="maq:Maqu_2386"/>
<dbReference type="eggNOG" id="COG0360">
    <property type="taxonomic scope" value="Bacteria"/>
</dbReference>
<dbReference type="HOGENOM" id="CLU_113441_6_0_6"/>
<dbReference type="OrthoDB" id="9812702at2"/>
<dbReference type="Proteomes" id="UP000000998">
    <property type="component" value="Chromosome"/>
</dbReference>
<dbReference type="GO" id="GO:0022627">
    <property type="term" value="C:cytosolic small ribosomal subunit"/>
    <property type="evidence" value="ECO:0007669"/>
    <property type="project" value="TreeGrafter"/>
</dbReference>
<dbReference type="GO" id="GO:0070181">
    <property type="term" value="F:small ribosomal subunit rRNA binding"/>
    <property type="evidence" value="ECO:0007669"/>
    <property type="project" value="TreeGrafter"/>
</dbReference>
<dbReference type="GO" id="GO:0003735">
    <property type="term" value="F:structural constituent of ribosome"/>
    <property type="evidence" value="ECO:0007669"/>
    <property type="project" value="InterPro"/>
</dbReference>
<dbReference type="GO" id="GO:0006412">
    <property type="term" value="P:translation"/>
    <property type="evidence" value="ECO:0007669"/>
    <property type="project" value="UniProtKB-UniRule"/>
</dbReference>
<dbReference type="CDD" id="cd00473">
    <property type="entry name" value="bS6"/>
    <property type="match status" value="1"/>
</dbReference>
<dbReference type="FunFam" id="3.30.70.60:FF:000003">
    <property type="entry name" value="30S ribosomal protein S6"/>
    <property type="match status" value="1"/>
</dbReference>
<dbReference type="Gene3D" id="3.30.70.60">
    <property type="match status" value="1"/>
</dbReference>
<dbReference type="HAMAP" id="MF_00360">
    <property type="entry name" value="Ribosomal_bS6"/>
    <property type="match status" value="1"/>
</dbReference>
<dbReference type="InterPro" id="IPR000529">
    <property type="entry name" value="Ribosomal_bS6"/>
</dbReference>
<dbReference type="InterPro" id="IPR020815">
    <property type="entry name" value="Ribosomal_bS6_CS"/>
</dbReference>
<dbReference type="InterPro" id="IPR035980">
    <property type="entry name" value="Ribosomal_bS6_sf"/>
</dbReference>
<dbReference type="InterPro" id="IPR020814">
    <property type="entry name" value="Ribosomal_S6_plastid/chlpt"/>
</dbReference>
<dbReference type="InterPro" id="IPR014717">
    <property type="entry name" value="Transl_elong_EF1B/ribsomal_bS6"/>
</dbReference>
<dbReference type="NCBIfam" id="TIGR00166">
    <property type="entry name" value="S6"/>
    <property type="match status" value="1"/>
</dbReference>
<dbReference type="PANTHER" id="PTHR21011">
    <property type="entry name" value="MITOCHONDRIAL 28S RIBOSOMAL PROTEIN S6"/>
    <property type="match status" value="1"/>
</dbReference>
<dbReference type="PANTHER" id="PTHR21011:SF1">
    <property type="entry name" value="SMALL RIBOSOMAL SUBUNIT PROTEIN BS6M"/>
    <property type="match status" value="1"/>
</dbReference>
<dbReference type="Pfam" id="PF01250">
    <property type="entry name" value="Ribosomal_S6"/>
    <property type="match status" value="1"/>
</dbReference>
<dbReference type="SUPFAM" id="SSF54995">
    <property type="entry name" value="Ribosomal protein S6"/>
    <property type="match status" value="1"/>
</dbReference>
<dbReference type="PROSITE" id="PS01048">
    <property type="entry name" value="RIBOSOMAL_S6"/>
    <property type="match status" value="1"/>
</dbReference>
<feature type="chain" id="PRO_1000005292" description="Small ribosomal subunit protein bS6">
    <location>
        <begin position="1"/>
        <end position="137"/>
    </location>
</feature>
<feature type="region of interest" description="Disordered" evidence="2">
    <location>
        <begin position="99"/>
        <end position="137"/>
    </location>
</feature>
<feature type="compositionally biased region" description="Basic and acidic residues" evidence="2">
    <location>
        <begin position="105"/>
        <end position="129"/>
    </location>
</feature>
<protein>
    <recommendedName>
        <fullName evidence="1">Small ribosomal subunit protein bS6</fullName>
    </recommendedName>
    <alternativeName>
        <fullName evidence="3">30S ribosomal protein S6</fullName>
    </alternativeName>
</protein>
<reference key="1">
    <citation type="journal article" date="2011" name="Appl. Environ. Microbiol.">
        <title>Genomic potential of Marinobacter aquaeolei, a biogeochemical 'opportunitroph'.</title>
        <authorList>
            <person name="Singer E."/>
            <person name="Webb E.A."/>
            <person name="Nelson W.C."/>
            <person name="Heidelberg J.F."/>
            <person name="Ivanova N."/>
            <person name="Pati A."/>
            <person name="Edwards K.J."/>
        </authorList>
    </citation>
    <scope>NUCLEOTIDE SEQUENCE [LARGE SCALE GENOMIC DNA]</scope>
    <source>
        <strain>ATCC 700491 / DSM 11845 / VT8</strain>
    </source>
</reference>